<gene>
    <name evidence="1" type="primary">apt</name>
    <name type="ordered locus">lwe1537</name>
</gene>
<sequence>MEIKDLQDYVAIVNDWPKKGIVFKDITPLMNDGEAYRFATDKIVEYAKELKIDIIVGPEARGFIIGCPVAYALGIGFAPVRKPGKLPRETIEMEYDLEYGTNKLSMHSDAIKPGQRVLITDDLLATGGTIEATIKLVEELGGIVAGCAFLIELKELEGHKKLNGYDRLILMQL</sequence>
<accession>A0AIX3</accession>
<dbReference type="EC" id="2.4.2.7" evidence="1"/>
<dbReference type="EMBL" id="AM263198">
    <property type="protein sequence ID" value="CAK20955.1"/>
    <property type="molecule type" value="Genomic_DNA"/>
</dbReference>
<dbReference type="RefSeq" id="WP_003727399.1">
    <property type="nucleotide sequence ID" value="NC_008555.1"/>
</dbReference>
<dbReference type="SMR" id="A0AIX3"/>
<dbReference type="STRING" id="386043.lwe1537"/>
<dbReference type="KEGG" id="lwe:lwe1537"/>
<dbReference type="eggNOG" id="COG0503">
    <property type="taxonomic scope" value="Bacteria"/>
</dbReference>
<dbReference type="HOGENOM" id="CLU_063339_3_0_9"/>
<dbReference type="OrthoDB" id="9803963at2"/>
<dbReference type="UniPathway" id="UPA00588">
    <property type="reaction ID" value="UER00646"/>
</dbReference>
<dbReference type="Proteomes" id="UP000000779">
    <property type="component" value="Chromosome"/>
</dbReference>
<dbReference type="GO" id="GO:0005737">
    <property type="term" value="C:cytoplasm"/>
    <property type="evidence" value="ECO:0007669"/>
    <property type="project" value="UniProtKB-SubCell"/>
</dbReference>
<dbReference type="GO" id="GO:0002055">
    <property type="term" value="F:adenine binding"/>
    <property type="evidence" value="ECO:0007669"/>
    <property type="project" value="TreeGrafter"/>
</dbReference>
<dbReference type="GO" id="GO:0003999">
    <property type="term" value="F:adenine phosphoribosyltransferase activity"/>
    <property type="evidence" value="ECO:0007669"/>
    <property type="project" value="UniProtKB-UniRule"/>
</dbReference>
<dbReference type="GO" id="GO:0016208">
    <property type="term" value="F:AMP binding"/>
    <property type="evidence" value="ECO:0007669"/>
    <property type="project" value="TreeGrafter"/>
</dbReference>
<dbReference type="GO" id="GO:0006168">
    <property type="term" value="P:adenine salvage"/>
    <property type="evidence" value="ECO:0007669"/>
    <property type="project" value="InterPro"/>
</dbReference>
<dbReference type="GO" id="GO:0044209">
    <property type="term" value="P:AMP salvage"/>
    <property type="evidence" value="ECO:0007669"/>
    <property type="project" value="UniProtKB-UniRule"/>
</dbReference>
<dbReference type="GO" id="GO:0006166">
    <property type="term" value="P:purine ribonucleoside salvage"/>
    <property type="evidence" value="ECO:0007669"/>
    <property type="project" value="UniProtKB-KW"/>
</dbReference>
<dbReference type="CDD" id="cd06223">
    <property type="entry name" value="PRTases_typeI"/>
    <property type="match status" value="1"/>
</dbReference>
<dbReference type="FunFam" id="3.40.50.2020:FF:000004">
    <property type="entry name" value="Adenine phosphoribosyltransferase"/>
    <property type="match status" value="1"/>
</dbReference>
<dbReference type="Gene3D" id="3.40.50.2020">
    <property type="match status" value="1"/>
</dbReference>
<dbReference type="HAMAP" id="MF_00004">
    <property type="entry name" value="Aden_phosphoribosyltr"/>
    <property type="match status" value="1"/>
</dbReference>
<dbReference type="InterPro" id="IPR005764">
    <property type="entry name" value="Ade_phspho_trans"/>
</dbReference>
<dbReference type="InterPro" id="IPR000836">
    <property type="entry name" value="PRibTrfase_dom"/>
</dbReference>
<dbReference type="InterPro" id="IPR029057">
    <property type="entry name" value="PRTase-like"/>
</dbReference>
<dbReference type="InterPro" id="IPR050054">
    <property type="entry name" value="UPRTase/APRTase"/>
</dbReference>
<dbReference type="NCBIfam" id="TIGR01090">
    <property type="entry name" value="apt"/>
    <property type="match status" value="1"/>
</dbReference>
<dbReference type="NCBIfam" id="NF002633">
    <property type="entry name" value="PRK02304.1-2"/>
    <property type="match status" value="1"/>
</dbReference>
<dbReference type="NCBIfam" id="NF002634">
    <property type="entry name" value="PRK02304.1-3"/>
    <property type="match status" value="1"/>
</dbReference>
<dbReference type="NCBIfam" id="NF002636">
    <property type="entry name" value="PRK02304.1-5"/>
    <property type="match status" value="1"/>
</dbReference>
<dbReference type="PANTHER" id="PTHR32315">
    <property type="entry name" value="ADENINE PHOSPHORIBOSYLTRANSFERASE"/>
    <property type="match status" value="1"/>
</dbReference>
<dbReference type="PANTHER" id="PTHR32315:SF3">
    <property type="entry name" value="ADENINE PHOSPHORIBOSYLTRANSFERASE"/>
    <property type="match status" value="1"/>
</dbReference>
<dbReference type="Pfam" id="PF00156">
    <property type="entry name" value="Pribosyltran"/>
    <property type="match status" value="1"/>
</dbReference>
<dbReference type="SUPFAM" id="SSF53271">
    <property type="entry name" value="PRTase-like"/>
    <property type="match status" value="1"/>
</dbReference>
<evidence type="ECO:0000255" key="1">
    <source>
        <dbReference type="HAMAP-Rule" id="MF_00004"/>
    </source>
</evidence>
<comment type="function">
    <text evidence="1">Catalyzes a salvage reaction resulting in the formation of AMP, that is energically less costly than de novo synthesis.</text>
</comment>
<comment type="catalytic activity">
    <reaction evidence="1">
        <text>AMP + diphosphate = 5-phospho-alpha-D-ribose 1-diphosphate + adenine</text>
        <dbReference type="Rhea" id="RHEA:16609"/>
        <dbReference type="ChEBI" id="CHEBI:16708"/>
        <dbReference type="ChEBI" id="CHEBI:33019"/>
        <dbReference type="ChEBI" id="CHEBI:58017"/>
        <dbReference type="ChEBI" id="CHEBI:456215"/>
        <dbReference type="EC" id="2.4.2.7"/>
    </reaction>
</comment>
<comment type="pathway">
    <text evidence="1">Purine metabolism; AMP biosynthesis via salvage pathway; AMP from adenine: step 1/1.</text>
</comment>
<comment type="subunit">
    <text evidence="1">Homodimer.</text>
</comment>
<comment type="subcellular location">
    <subcellularLocation>
        <location evidence="1">Cytoplasm</location>
    </subcellularLocation>
</comment>
<comment type="similarity">
    <text evidence="1">Belongs to the purine/pyrimidine phosphoribosyltransferase family.</text>
</comment>
<proteinExistence type="inferred from homology"/>
<name>APT_LISW6</name>
<reference key="1">
    <citation type="journal article" date="2006" name="J. Bacteriol.">
        <title>Whole-genome sequence of Listeria welshimeri reveals common steps in genome reduction with Listeria innocua as compared to Listeria monocytogenes.</title>
        <authorList>
            <person name="Hain T."/>
            <person name="Steinweg C."/>
            <person name="Kuenne C.T."/>
            <person name="Billion A."/>
            <person name="Ghai R."/>
            <person name="Chatterjee S.S."/>
            <person name="Domann E."/>
            <person name="Kaerst U."/>
            <person name="Goesmann A."/>
            <person name="Bekel T."/>
            <person name="Bartels D."/>
            <person name="Kaiser O."/>
            <person name="Meyer F."/>
            <person name="Puehler A."/>
            <person name="Weisshaar B."/>
            <person name="Wehland J."/>
            <person name="Liang C."/>
            <person name="Dandekar T."/>
            <person name="Lampidis R."/>
            <person name="Kreft J."/>
            <person name="Goebel W."/>
            <person name="Chakraborty T."/>
        </authorList>
    </citation>
    <scope>NUCLEOTIDE SEQUENCE [LARGE SCALE GENOMIC DNA]</scope>
    <source>
        <strain>ATCC 35897 / DSM 20650 / CCUG 15529 / CIP 8149 / NCTC 11857 / SLCC 5334 / V8</strain>
    </source>
</reference>
<feature type="chain" id="PRO_1000000303" description="Adenine phosphoribosyltransferase">
    <location>
        <begin position="1"/>
        <end position="173"/>
    </location>
</feature>
<organism>
    <name type="scientific">Listeria welshimeri serovar 6b (strain ATCC 35897 / DSM 20650 / CCUG 15529 / CIP 8149 / NCTC 11857 / SLCC 5334 / V8)</name>
    <dbReference type="NCBI Taxonomy" id="386043"/>
    <lineage>
        <taxon>Bacteria</taxon>
        <taxon>Bacillati</taxon>
        <taxon>Bacillota</taxon>
        <taxon>Bacilli</taxon>
        <taxon>Bacillales</taxon>
        <taxon>Listeriaceae</taxon>
        <taxon>Listeria</taxon>
    </lineage>
</organism>
<keyword id="KW-0963">Cytoplasm</keyword>
<keyword id="KW-0328">Glycosyltransferase</keyword>
<keyword id="KW-0660">Purine salvage</keyword>
<keyword id="KW-0808">Transferase</keyword>
<protein>
    <recommendedName>
        <fullName evidence="1">Adenine phosphoribosyltransferase</fullName>
        <shortName evidence="1">APRT</shortName>
        <ecNumber evidence="1">2.4.2.7</ecNumber>
    </recommendedName>
</protein>